<accession>P18599</accession>
<proteinExistence type="evidence at transcript level"/>
<gene>
    <name type="primary">HTR2A</name>
</gene>
<sequence length="471" mass="52702">MEILCEDNTSLSSIPNSLMQVDGDSGLYRNDFNSRDANSSDASNWTIDGENRTNLSFEGYLPPTCLSILHLQEKNWSALLTAVVIILTIAGNILVIMAVSLEKKLQNATNYFLMSLAIADMLLGFLVMPVSMLTILYGYRWPLPSKLCAVWIYLDVLFSTASIMHLCAISLDRYVAIQNPIHHSRFNSRTKAFLKIIAVWTISVGVSMPIPVFGLQDDSKVFKQGSCLLADDNFVLIGSFVAFFIPLTIMVITYFLTIKSLQKEATLCVSDLSTRAKLASFSFLPQSSLSSEKLFQRSIHREPGSYTGRRTMQSISNEQKACKVLGIVFFLFVVMWCPFFITNIMAVICKESCNEHVIGALLNVFVWIGYLSSAVNPLVYTLFNKTYRSAFSRYIQCQYKENRKPLQLILVNTIPALAYKSSQLQAGQNKDSKEDAEPTDNDCSMVTLGKQQSEETCTDNINTVNEKVSCV</sequence>
<comment type="function">
    <text evidence="2 3">G-protein coupled receptor for 5-hydroxytryptamine (serotonin). Also functions as a receptor for various drugs and psychoactive substances, including mescaline, psilocybin, 1-(2,5-dimethoxy-4-iodophenyl)-2-aminopropane (DOI) and lysergic acid diethylamide (LSD). Ligand binding causes a conformation change that triggers signaling via guanine nucleotide-binding proteins (G proteins) and modulates the activity of downstream effectors. HTR2A is coupled to G(q)/G(11) G alpha proteins and activates phospholipase C-beta, releasing diacylglycerol (DAG) and inositol 1,4,5-trisphosphate (IP3) second messengers that modulate the activity of phosphatidylinositol 3-kinase and promote the release of Ca(2+) ions from intracellular stores, respectively. Beta-arrestin family members inhibit signaling via G proteins and mediate activation of alternative signaling pathways. Affects neural activity, perception, cognition and mood (By similarity). Plays a role in the regulation of behavior, including responses to anxiogenic situations and psychoactive substances. Plays a role in intestinal smooth muscle contraction, and may play a role in arterial vasoconstriction (By similarity).</text>
</comment>
<comment type="activity regulation">
    <text evidence="2">G-protein coupled receptor activity is regulated by lipids: oleamide increases HTR2A-mediated activity.</text>
</comment>
<comment type="subunit">
    <text evidence="2">Interacts (via C-terminus) with MPDZ and PATJ. May interact (via C-terminus) with MPP3, PRDX6, DLG4, DLG1, CASK, APBA1 and MAGI2. Interacts with GRM2 and DRD2; this may affect signaling.</text>
</comment>
<comment type="subcellular location">
    <subcellularLocation>
        <location evidence="2">Cell membrane</location>
        <topology evidence="2">Multi-pass membrane protein</topology>
    </subcellularLocation>
    <subcellularLocation>
        <location evidence="3">Cell projection</location>
        <location evidence="3">Dendrite</location>
    </subcellularLocation>
    <subcellularLocation>
        <location evidence="1">Cell projection</location>
        <location evidence="1">Axon</location>
    </subcellularLocation>
    <subcellularLocation>
        <location evidence="1">Cytoplasmic vesicle</location>
    </subcellularLocation>
    <subcellularLocation>
        <location evidence="1">Membrane</location>
        <location evidence="1">Caveola</location>
    </subcellularLocation>
    <subcellularLocation>
        <location evidence="1">Presynapse</location>
    </subcellularLocation>
</comment>
<comment type="domain">
    <text evidence="2">The PDZ domain-binding motif is involved in the interaction with PATJ, CASK, APBA1, DLG1 and DLG4.</text>
</comment>
<comment type="similarity">
    <text evidence="6">Belongs to the G-protein coupled receptor 1 family.</text>
</comment>
<organism>
    <name type="scientific">Cricetulus griseus</name>
    <name type="common">Chinese hamster</name>
    <name type="synonym">Cricetulus barabensis griseus</name>
    <dbReference type="NCBI Taxonomy" id="10029"/>
    <lineage>
        <taxon>Eukaryota</taxon>
        <taxon>Metazoa</taxon>
        <taxon>Chordata</taxon>
        <taxon>Craniata</taxon>
        <taxon>Vertebrata</taxon>
        <taxon>Euteleostomi</taxon>
        <taxon>Mammalia</taxon>
        <taxon>Eutheria</taxon>
        <taxon>Euarchontoglires</taxon>
        <taxon>Glires</taxon>
        <taxon>Rodentia</taxon>
        <taxon>Myomorpha</taxon>
        <taxon>Muroidea</taxon>
        <taxon>Cricetidae</taxon>
        <taxon>Cricetinae</taxon>
        <taxon>Cricetulus</taxon>
    </lineage>
</organism>
<reference key="1">
    <citation type="journal article" date="1990" name="Nucleic Acids Res.">
        <title>Chinese hamster serotonin (5-HT) type 2 receptor cDNA sequence.</title>
        <authorList>
            <person name="Chambard J.-C."/>
            <person name="van Obberghen-Schilling E."/>
            <person name="Haslam R.J."/>
            <person name="Vouret V."/>
            <person name="Pouyssegur J."/>
        </authorList>
    </citation>
    <scope>NUCLEOTIDE SEQUENCE [MRNA]</scope>
    <source>
        <tissue>Lung</tissue>
    </source>
</reference>
<name>5HT2A_CRIGR</name>
<protein>
    <recommendedName>
        <fullName>5-hydroxytryptamine receptor 2A</fullName>
        <shortName>5-HT-2</shortName>
        <shortName>5-HT-2A</shortName>
    </recommendedName>
    <alternativeName>
        <fullName>Serotonin receptor 2A</fullName>
    </alternativeName>
</protein>
<evidence type="ECO:0000250" key="1">
    <source>
        <dbReference type="UniProtKB" id="P14842"/>
    </source>
</evidence>
<evidence type="ECO:0000250" key="2">
    <source>
        <dbReference type="UniProtKB" id="P28223"/>
    </source>
</evidence>
<evidence type="ECO:0000250" key="3">
    <source>
        <dbReference type="UniProtKB" id="P35363"/>
    </source>
</evidence>
<evidence type="ECO:0000250" key="4">
    <source>
        <dbReference type="UniProtKB" id="P41595"/>
    </source>
</evidence>
<evidence type="ECO:0000255" key="5"/>
<evidence type="ECO:0000255" key="6">
    <source>
        <dbReference type="PROSITE-ProRule" id="PRU00521"/>
    </source>
</evidence>
<keyword id="KW-0085">Behavior</keyword>
<keyword id="KW-1003">Cell membrane</keyword>
<keyword id="KW-0966">Cell projection</keyword>
<keyword id="KW-0968">Cytoplasmic vesicle</keyword>
<keyword id="KW-1015">Disulfide bond</keyword>
<keyword id="KW-0297">G-protein coupled receptor</keyword>
<keyword id="KW-0325">Glycoprotein</keyword>
<keyword id="KW-0472">Membrane</keyword>
<keyword id="KW-0597">Phosphoprotein</keyword>
<keyword id="KW-0675">Receptor</keyword>
<keyword id="KW-0770">Synapse</keyword>
<keyword id="KW-0807">Transducer</keyword>
<keyword id="KW-0812">Transmembrane</keyword>
<keyword id="KW-1133">Transmembrane helix</keyword>
<dbReference type="EMBL" id="X53791">
    <property type="protein sequence ID" value="CAA37800.1"/>
    <property type="molecule type" value="mRNA"/>
</dbReference>
<dbReference type="PIR" id="S11280">
    <property type="entry name" value="S11280"/>
</dbReference>
<dbReference type="RefSeq" id="NP_001233657.1">
    <property type="nucleotide sequence ID" value="NM_001246728.1"/>
</dbReference>
<dbReference type="SMR" id="P18599"/>
<dbReference type="GlyCosmos" id="P18599">
    <property type="glycosylation" value="5 sites, No reported glycans"/>
</dbReference>
<dbReference type="PaxDb" id="10029-NP_001233657.1"/>
<dbReference type="Ensembl" id="ENSCGRT00001000391.1">
    <property type="protein sequence ID" value="ENSCGRP00001000367.1"/>
    <property type="gene ID" value="ENSCGRG00001000307.1"/>
</dbReference>
<dbReference type="GeneID" id="100689471"/>
<dbReference type="KEGG" id="cge:100689471"/>
<dbReference type="CTD" id="3356"/>
<dbReference type="eggNOG" id="KOG3656">
    <property type="taxonomic scope" value="Eukaryota"/>
</dbReference>
<dbReference type="GeneTree" id="ENSGT01050000244937"/>
<dbReference type="OMA" id="MVTIGIH"/>
<dbReference type="OrthoDB" id="420518at2759"/>
<dbReference type="Proteomes" id="UP000694386">
    <property type="component" value="Unplaced"/>
</dbReference>
<dbReference type="Proteomes" id="UP001108280">
    <property type="component" value="Chromosome 1"/>
</dbReference>
<dbReference type="GO" id="GO:0030424">
    <property type="term" value="C:axon"/>
    <property type="evidence" value="ECO:0007669"/>
    <property type="project" value="UniProtKB-SubCell"/>
</dbReference>
<dbReference type="GO" id="GO:0005901">
    <property type="term" value="C:caveola"/>
    <property type="evidence" value="ECO:0007669"/>
    <property type="project" value="UniProtKB-SubCell"/>
</dbReference>
<dbReference type="GO" id="GO:0031410">
    <property type="term" value="C:cytoplasmic vesicle"/>
    <property type="evidence" value="ECO:0007669"/>
    <property type="project" value="UniProtKB-KW"/>
</dbReference>
<dbReference type="GO" id="GO:0030425">
    <property type="term" value="C:dendrite"/>
    <property type="evidence" value="ECO:0007669"/>
    <property type="project" value="UniProtKB-SubCell"/>
</dbReference>
<dbReference type="GO" id="GO:0098666">
    <property type="term" value="C:G protein-coupled serotonin receptor complex"/>
    <property type="evidence" value="ECO:0007669"/>
    <property type="project" value="Ensembl"/>
</dbReference>
<dbReference type="GO" id="GO:0098793">
    <property type="term" value="C:presynapse"/>
    <property type="evidence" value="ECO:0007669"/>
    <property type="project" value="UniProtKB-SubCell"/>
</dbReference>
<dbReference type="GO" id="GO:0071886">
    <property type="term" value="F:1-(4-iodo-2,5-dimethoxyphenyl)propan-2-amine binding"/>
    <property type="evidence" value="ECO:0007669"/>
    <property type="project" value="Ensembl"/>
</dbReference>
<dbReference type="GO" id="GO:0001587">
    <property type="term" value="F:Gq/11-coupled serotonin receptor activity"/>
    <property type="evidence" value="ECO:0007669"/>
    <property type="project" value="Ensembl"/>
</dbReference>
<dbReference type="GO" id="GO:0042802">
    <property type="term" value="F:identical protein binding"/>
    <property type="evidence" value="ECO:0007669"/>
    <property type="project" value="Ensembl"/>
</dbReference>
<dbReference type="GO" id="GO:0030594">
    <property type="term" value="F:neurotransmitter receptor activity"/>
    <property type="evidence" value="ECO:0007669"/>
    <property type="project" value="TreeGrafter"/>
</dbReference>
<dbReference type="GO" id="GO:0030296">
    <property type="term" value="F:protein tyrosine kinase activator activity"/>
    <property type="evidence" value="ECO:0007669"/>
    <property type="project" value="Ensembl"/>
</dbReference>
<dbReference type="GO" id="GO:0051378">
    <property type="term" value="F:serotonin binding"/>
    <property type="evidence" value="ECO:0007669"/>
    <property type="project" value="Ensembl"/>
</dbReference>
<dbReference type="GO" id="GO:0099589">
    <property type="term" value="F:serotonin receptor activity"/>
    <property type="evidence" value="ECO:0007669"/>
    <property type="project" value="Ensembl"/>
</dbReference>
<dbReference type="GO" id="GO:0007268">
    <property type="term" value="P:chemical synaptic transmission"/>
    <property type="evidence" value="ECO:0007669"/>
    <property type="project" value="TreeGrafter"/>
</dbReference>
<dbReference type="GO" id="GO:0007187">
    <property type="term" value="P:G protein-coupled receptor signaling pathway, coupled to cyclic nucleotide second messenger"/>
    <property type="evidence" value="ECO:0007669"/>
    <property type="project" value="TreeGrafter"/>
</dbReference>
<dbReference type="GO" id="GO:0006096">
    <property type="term" value="P:glycolytic process"/>
    <property type="evidence" value="ECO:0007669"/>
    <property type="project" value="Ensembl"/>
</dbReference>
<dbReference type="GO" id="GO:0006874">
    <property type="term" value="P:intracellular calcium ion homeostasis"/>
    <property type="evidence" value="ECO:0007669"/>
    <property type="project" value="Ensembl"/>
</dbReference>
<dbReference type="GO" id="GO:0007208">
    <property type="term" value="P:phospholipase C-activating serotonin receptor signaling pathway"/>
    <property type="evidence" value="ECO:0007669"/>
    <property type="project" value="Ensembl"/>
</dbReference>
<dbReference type="GO" id="GO:0070374">
    <property type="term" value="P:positive regulation of ERK1 and ERK2 cascade"/>
    <property type="evidence" value="ECO:0007669"/>
    <property type="project" value="Ensembl"/>
</dbReference>
<dbReference type="GO" id="GO:0045600">
    <property type="term" value="P:positive regulation of fat cell differentiation"/>
    <property type="evidence" value="ECO:0007669"/>
    <property type="project" value="Ensembl"/>
</dbReference>
<dbReference type="GO" id="GO:0045821">
    <property type="term" value="P:positive regulation of glycolytic process"/>
    <property type="evidence" value="ECO:0007669"/>
    <property type="project" value="Ensembl"/>
</dbReference>
<dbReference type="GO" id="GO:0010513">
    <property type="term" value="P:positive regulation of phosphatidylinositol biosynthetic process"/>
    <property type="evidence" value="ECO:0007669"/>
    <property type="project" value="Ensembl"/>
</dbReference>
<dbReference type="GO" id="GO:0044380">
    <property type="term" value="P:protein localization to cytoskeleton"/>
    <property type="evidence" value="ECO:0007669"/>
    <property type="project" value="Ensembl"/>
</dbReference>
<dbReference type="GO" id="GO:0051209">
    <property type="term" value="P:release of sequestered calcium ion into cytosol"/>
    <property type="evidence" value="ECO:0007669"/>
    <property type="project" value="Ensembl"/>
</dbReference>
<dbReference type="GO" id="GO:0009410">
    <property type="term" value="P:response to xenobiotic stimulus"/>
    <property type="evidence" value="ECO:0007669"/>
    <property type="project" value="Ensembl"/>
</dbReference>
<dbReference type="GO" id="GO:0007210">
    <property type="term" value="P:serotonin receptor signaling pathway"/>
    <property type="evidence" value="ECO:0007669"/>
    <property type="project" value="TreeGrafter"/>
</dbReference>
<dbReference type="CDD" id="cd15304">
    <property type="entry name" value="7tmA_5-HT2A"/>
    <property type="match status" value="1"/>
</dbReference>
<dbReference type="Gene3D" id="1.20.1070.10">
    <property type="entry name" value="Rhodopsin 7-helix transmembrane proteins"/>
    <property type="match status" value="1"/>
</dbReference>
<dbReference type="InterPro" id="IPR000455">
    <property type="entry name" value="5HT2A_rcpt"/>
</dbReference>
<dbReference type="InterPro" id="IPR002231">
    <property type="entry name" value="5HT_rcpt"/>
</dbReference>
<dbReference type="InterPro" id="IPR000276">
    <property type="entry name" value="GPCR_Rhodpsn"/>
</dbReference>
<dbReference type="InterPro" id="IPR017452">
    <property type="entry name" value="GPCR_Rhodpsn_7TM"/>
</dbReference>
<dbReference type="PANTHER" id="PTHR24247">
    <property type="entry name" value="5-HYDROXYTRYPTAMINE RECEPTOR"/>
    <property type="match status" value="1"/>
</dbReference>
<dbReference type="PANTHER" id="PTHR24247:SF30">
    <property type="entry name" value="5-HYDROXYTRYPTAMINE RECEPTOR 2A"/>
    <property type="match status" value="1"/>
</dbReference>
<dbReference type="Pfam" id="PF00001">
    <property type="entry name" value="7tm_1"/>
    <property type="match status" value="1"/>
</dbReference>
<dbReference type="PRINTS" id="PR00516">
    <property type="entry name" value="5HT2ARECEPTR"/>
</dbReference>
<dbReference type="PRINTS" id="PR01101">
    <property type="entry name" value="5HTRECEPTOR"/>
</dbReference>
<dbReference type="PRINTS" id="PR00237">
    <property type="entry name" value="GPCRRHODOPSN"/>
</dbReference>
<dbReference type="SMART" id="SM01381">
    <property type="entry name" value="7TM_GPCR_Srsx"/>
    <property type="match status" value="1"/>
</dbReference>
<dbReference type="SUPFAM" id="SSF81321">
    <property type="entry name" value="Family A G protein-coupled receptor-like"/>
    <property type="match status" value="1"/>
</dbReference>
<dbReference type="PROSITE" id="PS00237">
    <property type="entry name" value="G_PROTEIN_RECEP_F1_1"/>
    <property type="match status" value="1"/>
</dbReference>
<dbReference type="PROSITE" id="PS50262">
    <property type="entry name" value="G_PROTEIN_RECEP_F1_2"/>
    <property type="match status" value="1"/>
</dbReference>
<feature type="chain" id="PRO_0000068945" description="5-hydroxytryptamine receptor 2A">
    <location>
        <begin position="1"/>
        <end position="471"/>
    </location>
</feature>
<feature type="topological domain" description="Extracellular" evidence="2">
    <location>
        <begin position="1"/>
        <end position="80"/>
    </location>
</feature>
<feature type="transmembrane region" description="Helical; Name=1" evidence="2">
    <location>
        <begin position="81"/>
        <end position="97"/>
    </location>
</feature>
<feature type="topological domain" description="Cytoplasmic" evidence="2">
    <location>
        <begin position="98"/>
        <end position="111"/>
    </location>
</feature>
<feature type="transmembrane region" description="Helical; Name=2" evidence="2">
    <location>
        <begin position="112"/>
        <end position="137"/>
    </location>
</feature>
<feature type="topological domain" description="Extracellular" evidence="2">
    <location>
        <begin position="138"/>
        <end position="146"/>
    </location>
</feature>
<feature type="transmembrane region" description="Helical; Name=3" evidence="2">
    <location>
        <begin position="147"/>
        <end position="171"/>
    </location>
</feature>
<feature type="topological domain" description="Cytoplasmic" evidence="2">
    <location>
        <begin position="172"/>
        <end position="191"/>
    </location>
</feature>
<feature type="transmembrane region" description="Helical; Name=4" evidence="2">
    <location>
        <begin position="192"/>
        <end position="215"/>
    </location>
</feature>
<feature type="topological domain" description="Extracellular" evidence="2">
    <location>
        <begin position="216"/>
        <end position="232"/>
    </location>
</feature>
<feature type="transmembrane region" description="Helical; Name=5" evidence="2">
    <location>
        <begin position="233"/>
        <end position="258"/>
    </location>
</feature>
<feature type="topological domain" description="Cytoplasmic" evidence="2">
    <location>
        <begin position="259"/>
        <end position="322"/>
    </location>
</feature>
<feature type="transmembrane region" description="Helical; Name=6" evidence="2">
    <location>
        <begin position="323"/>
        <end position="348"/>
    </location>
</feature>
<feature type="topological domain" description="Extracellular" evidence="2">
    <location>
        <begin position="349"/>
        <end position="356"/>
    </location>
</feature>
<feature type="transmembrane region" description="Helical; Name=7" evidence="2">
    <location>
        <begin position="357"/>
        <end position="382"/>
    </location>
</feature>
<feature type="topological domain" description="Cytoplasmic" evidence="2">
    <location>
        <begin position="383"/>
        <end position="471"/>
    </location>
</feature>
<feature type="short sequence motif" description="DRY motif; important for ligand-induced conformation changes" evidence="4">
    <location>
        <begin position="172"/>
        <end position="174"/>
    </location>
</feature>
<feature type="short sequence motif" description="NPxxY motif; important for ligand-induced conformation changes and signaling" evidence="4">
    <location>
        <begin position="376"/>
        <end position="380"/>
    </location>
</feature>
<feature type="short sequence motif" description="PDZ-binding" evidence="2">
    <location>
        <begin position="469"/>
        <end position="471"/>
    </location>
</feature>
<feature type="binding site" evidence="2">
    <location>
        <position position="155"/>
    </location>
    <ligand>
        <name>serotonin</name>
        <dbReference type="ChEBI" id="CHEBI:350546"/>
    </ligand>
</feature>
<feature type="binding site" evidence="2">
    <location>
        <position position="343"/>
    </location>
    <ligand>
        <name>serotonin</name>
        <dbReference type="ChEBI" id="CHEBI:350546"/>
    </ligand>
</feature>
<feature type="site" description="Hydrophobic barrier that decreases the speed of ligand binding and dissociation" evidence="2">
    <location>
        <position position="229"/>
    </location>
</feature>
<feature type="modified residue" description="Phosphoserine" evidence="2">
    <location>
        <position position="280"/>
    </location>
</feature>
<feature type="glycosylation site" description="N-linked (GlcNAc...) asparagine" evidence="5">
    <location>
        <position position="8"/>
    </location>
</feature>
<feature type="glycosylation site" description="N-linked (GlcNAc...) asparagine" evidence="5">
    <location>
        <position position="38"/>
    </location>
</feature>
<feature type="glycosylation site" description="N-linked (GlcNAc...) asparagine" evidence="5">
    <location>
        <position position="44"/>
    </location>
</feature>
<feature type="glycosylation site" description="N-linked (GlcNAc...) asparagine" evidence="5">
    <location>
        <position position="51"/>
    </location>
</feature>
<feature type="glycosylation site" description="N-linked (GlcNAc...) asparagine" evidence="5">
    <location>
        <position position="54"/>
    </location>
</feature>
<feature type="disulfide bond" evidence="6">
    <location>
        <begin position="148"/>
        <end position="227"/>
    </location>
</feature>
<feature type="disulfide bond" evidence="6">
    <location>
        <begin position="349"/>
        <end position="353"/>
    </location>
</feature>